<accession>B6IW12</accession>
<sequence length="216" mass="23802">MRTHPDFPNLFILDHPLIQHKLSHMRDRQRSTMGFRQLLKEIALLMGYEITRDLPLTTEAIETPLCTMDAPVIEGKKLAIVPILRAGLIMAEGLLELVPAAREGHIGLYRDHDTKMPVEYLVKLPDPAGRRFILVDPMLATGNSAVHAVDVLNRNGVLDAQIRFMALVAAPEGVRTFHAAHPTVPVFTAGLDSHLNPNAYIVPGLGDAGDRLFGTK</sequence>
<reference key="1">
    <citation type="submission" date="2007-03" db="EMBL/GenBank/DDBJ databases">
        <title>Genome sequence of Rhodospirillum centenum.</title>
        <authorList>
            <person name="Touchman J.W."/>
            <person name="Bauer C."/>
            <person name="Blankenship R.E."/>
        </authorList>
    </citation>
    <scope>NUCLEOTIDE SEQUENCE [LARGE SCALE GENOMIC DNA]</scope>
    <source>
        <strain>ATCC 51521 / SW</strain>
    </source>
</reference>
<gene>
    <name evidence="1" type="primary">upp</name>
    <name type="ordered locus">RC1_3121</name>
</gene>
<protein>
    <recommendedName>
        <fullName evidence="1">Uracil phosphoribosyltransferase</fullName>
        <ecNumber evidence="1">2.4.2.9</ecNumber>
    </recommendedName>
    <alternativeName>
        <fullName evidence="1">UMP pyrophosphorylase</fullName>
    </alternativeName>
    <alternativeName>
        <fullName evidence="1">UPRTase</fullName>
    </alternativeName>
</protein>
<feature type="chain" id="PRO_1000139153" description="Uracil phosphoribosyltransferase">
    <location>
        <begin position="1"/>
        <end position="216"/>
    </location>
</feature>
<feature type="binding site" evidence="1">
    <location>
        <position position="85"/>
    </location>
    <ligand>
        <name>5-phospho-alpha-D-ribose 1-diphosphate</name>
        <dbReference type="ChEBI" id="CHEBI:58017"/>
    </ligand>
</feature>
<feature type="binding site" evidence="1">
    <location>
        <position position="110"/>
    </location>
    <ligand>
        <name>5-phospho-alpha-D-ribose 1-diphosphate</name>
        <dbReference type="ChEBI" id="CHEBI:58017"/>
    </ligand>
</feature>
<feature type="binding site" evidence="1">
    <location>
        <begin position="136"/>
        <end position="144"/>
    </location>
    <ligand>
        <name>5-phospho-alpha-D-ribose 1-diphosphate</name>
        <dbReference type="ChEBI" id="CHEBI:58017"/>
    </ligand>
</feature>
<feature type="binding site" evidence="1">
    <location>
        <position position="201"/>
    </location>
    <ligand>
        <name>uracil</name>
        <dbReference type="ChEBI" id="CHEBI:17568"/>
    </ligand>
</feature>
<feature type="binding site" evidence="1">
    <location>
        <begin position="206"/>
        <end position="208"/>
    </location>
    <ligand>
        <name>uracil</name>
        <dbReference type="ChEBI" id="CHEBI:17568"/>
    </ligand>
</feature>
<feature type="binding site" evidence="1">
    <location>
        <position position="207"/>
    </location>
    <ligand>
        <name>5-phospho-alpha-D-ribose 1-diphosphate</name>
        <dbReference type="ChEBI" id="CHEBI:58017"/>
    </ligand>
</feature>
<proteinExistence type="inferred from homology"/>
<evidence type="ECO:0000255" key="1">
    <source>
        <dbReference type="HAMAP-Rule" id="MF_01218"/>
    </source>
</evidence>
<dbReference type="EC" id="2.4.2.9" evidence="1"/>
<dbReference type="EMBL" id="CP000613">
    <property type="protein sequence ID" value="ACJ00486.1"/>
    <property type="molecule type" value="Genomic_DNA"/>
</dbReference>
<dbReference type="RefSeq" id="WP_012568265.1">
    <property type="nucleotide sequence ID" value="NC_011420.2"/>
</dbReference>
<dbReference type="SMR" id="B6IW12"/>
<dbReference type="STRING" id="414684.RC1_3121"/>
<dbReference type="KEGG" id="rce:RC1_3121"/>
<dbReference type="eggNOG" id="COG0035">
    <property type="taxonomic scope" value="Bacteria"/>
</dbReference>
<dbReference type="HOGENOM" id="CLU_067096_2_2_5"/>
<dbReference type="OrthoDB" id="9781675at2"/>
<dbReference type="UniPathway" id="UPA00574">
    <property type="reaction ID" value="UER00636"/>
</dbReference>
<dbReference type="Proteomes" id="UP000001591">
    <property type="component" value="Chromosome"/>
</dbReference>
<dbReference type="GO" id="GO:0005525">
    <property type="term" value="F:GTP binding"/>
    <property type="evidence" value="ECO:0007669"/>
    <property type="project" value="UniProtKB-KW"/>
</dbReference>
<dbReference type="GO" id="GO:0000287">
    <property type="term" value="F:magnesium ion binding"/>
    <property type="evidence" value="ECO:0007669"/>
    <property type="project" value="UniProtKB-UniRule"/>
</dbReference>
<dbReference type="GO" id="GO:0004845">
    <property type="term" value="F:uracil phosphoribosyltransferase activity"/>
    <property type="evidence" value="ECO:0007669"/>
    <property type="project" value="UniProtKB-UniRule"/>
</dbReference>
<dbReference type="GO" id="GO:0044206">
    <property type="term" value="P:UMP salvage"/>
    <property type="evidence" value="ECO:0007669"/>
    <property type="project" value="UniProtKB-UniRule"/>
</dbReference>
<dbReference type="GO" id="GO:0006223">
    <property type="term" value="P:uracil salvage"/>
    <property type="evidence" value="ECO:0007669"/>
    <property type="project" value="InterPro"/>
</dbReference>
<dbReference type="CDD" id="cd06223">
    <property type="entry name" value="PRTases_typeI"/>
    <property type="match status" value="1"/>
</dbReference>
<dbReference type="FunFam" id="3.40.50.2020:FF:000003">
    <property type="entry name" value="Uracil phosphoribosyltransferase"/>
    <property type="match status" value="1"/>
</dbReference>
<dbReference type="Gene3D" id="3.40.50.2020">
    <property type="match status" value="1"/>
</dbReference>
<dbReference type="HAMAP" id="MF_01218_B">
    <property type="entry name" value="Upp_B"/>
    <property type="match status" value="1"/>
</dbReference>
<dbReference type="InterPro" id="IPR000836">
    <property type="entry name" value="PRibTrfase_dom"/>
</dbReference>
<dbReference type="InterPro" id="IPR029057">
    <property type="entry name" value="PRTase-like"/>
</dbReference>
<dbReference type="InterPro" id="IPR034332">
    <property type="entry name" value="Upp_B"/>
</dbReference>
<dbReference type="InterPro" id="IPR050054">
    <property type="entry name" value="UPRTase/APRTase"/>
</dbReference>
<dbReference type="InterPro" id="IPR005765">
    <property type="entry name" value="Ura_phspho_trans"/>
</dbReference>
<dbReference type="NCBIfam" id="NF001097">
    <property type="entry name" value="PRK00129.1"/>
    <property type="match status" value="1"/>
</dbReference>
<dbReference type="NCBIfam" id="TIGR01091">
    <property type="entry name" value="upp"/>
    <property type="match status" value="1"/>
</dbReference>
<dbReference type="PANTHER" id="PTHR32315">
    <property type="entry name" value="ADENINE PHOSPHORIBOSYLTRANSFERASE"/>
    <property type="match status" value="1"/>
</dbReference>
<dbReference type="PANTHER" id="PTHR32315:SF4">
    <property type="entry name" value="URACIL PHOSPHORIBOSYLTRANSFERASE, CHLOROPLASTIC"/>
    <property type="match status" value="1"/>
</dbReference>
<dbReference type="Pfam" id="PF14681">
    <property type="entry name" value="UPRTase"/>
    <property type="match status" value="1"/>
</dbReference>
<dbReference type="SUPFAM" id="SSF53271">
    <property type="entry name" value="PRTase-like"/>
    <property type="match status" value="1"/>
</dbReference>
<comment type="function">
    <text evidence="1">Catalyzes the conversion of uracil and 5-phospho-alpha-D-ribose 1-diphosphate (PRPP) to UMP and diphosphate.</text>
</comment>
<comment type="catalytic activity">
    <reaction evidence="1">
        <text>UMP + diphosphate = 5-phospho-alpha-D-ribose 1-diphosphate + uracil</text>
        <dbReference type="Rhea" id="RHEA:13017"/>
        <dbReference type="ChEBI" id="CHEBI:17568"/>
        <dbReference type="ChEBI" id="CHEBI:33019"/>
        <dbReference type="ChEBI" id="CHEBI:57865"/>
        <dbReference type="ChEBI" id="CHEBI:58017"/>
        <dbReference type="EC" id="2.4.2.9"/>
    </reaction>
</comment>
<comment type="cofactor">
    <cofactor evidence="1">
        <name>Mg(2+)</name>
        <dbReference type="ChEBI" id="CHEBI:18420"/>
    </cofactor>
    <text evidence="1">Binds 1 Mg(2+) ion per subunit. The magnesium is bound as Mg-PRPP.</text>
</comment>
<comment type="activity regulation">
    <text evidence="1">Allosterically activated by GTP.</text>
</comment>
<comment type="pathway">
    <text evidence="1">Pyrimidine metabolism; UMP biosynthesis via salvage pathway; UMP from uracil: step 1/1.</text>
</comment>
<comment type="similarity">
    <text evidence="1">Belongs to the UPRTase family.</text>
</comment>
<keyword id="KW-0021">Allosteric enzyme</keyword>
<keyword id="KW-0328">Glycosyltransferase</keyword>
<keyword id="KW-0342">GTP-binding</keyword>
<keyword id="KW-0460">Magnesium</keyword>
<keyword id="KW-0547">Nucleotide-binding</keyword>
<keyword id="KW-1185">Reference proteome</keyword>
<keyword id="KW-0808">Transferase</keyword>
<organism>
    <name type="scientific">Rhodospirillum centenum (strain ATCC 51521 / SW)</name>
    <dbReference type="NCBI Taxonomy" id="414684"/>
    <lineage>
        <taxon>Bacteria</taxon>
        <taxon>Pseudomonadati</taxon>
        <taxon>Pseudomonadota</taxon>
        <taxon>Alphaproteobacteria</taxon>
        <taxon>Rhodospirillales</taxon>
        <taxon>Rhodospirillaceae</taxon>
        <taxon>Rhodospirillum</taxon>
    </lineage>
</organism>
<name>UPP_RHOCS</name>